<accession>P05943</accession>
<accession>Q5BJ98</accession>
<reference key="1">
    <citation type="journal article" date="1988" name="Proc. Natl. Acad. Sci. U.S.A.">
        <title>Nerve growth factor induces the genes for two proteins related to a family of calcium-binding proteins in PC12 cells.</title>
        <authorList>
            <person name="Masiakowski P."/>
            <person name="Shooter E.M."/>
        </authorList>
    </citation>
    <scope>NUCLEOTIDE SEQUENCE [MRNA]</scope>
</reference>
<reference key="2">
    <citation type="submission" date="2002-01" db="EMBL/GenBank/DDBJ databases">
        <authorList>
            <person name="Park J.-Y."/>
            <person name="Kim W.-J."/>
            <person name="Chun S.-Y."/>
        </authorList>
    </citation>
    <scope>NUCLEOTIDE SEQUENCE [GENOMIC DNA]</scope>
</reference>
<reference key="3">
    <citation type="journal article" date="2004" name="Genome Res.">
        <title>The status, quality, and expansion of the NIH full-length cDNA project: the Mammalian Gene Collection (MGC).</title>
        <authorList>
            <consortium name="The MGC Project Team"/>
        </authorList>
    </citation>
    <scope>NUCLEOTIDE SEQUENCE [LARGE SCALE MRNA]</scope>
    <source>
        <tissue>Placenta</tissue>
    </source>
</reference>
<reference key="4">
    <citation type="submission" date="2006-11" db="UniProtKB">
        <authorList>
            <person name="Lubec G."/>
            <person name="Afjehi-Sadat L."/>
        </authorList>
    </citation>
    <scope>PROTEIN SEQUENCE OF 38-54</scope>
    <scope>IDENTIFICATION BY MASS SPECTROMETRY</scope>
    <source>
        <strain>Sprague-Dawley</strain>
        <tissue>Spinal cord</tissue>
    </source>
</reference>
<reference key="5">
    <citation type="journal article" date="2002" name="Nature">
        <title>Annexin II light chain regulates sensory neuron-specific sodium channel expression.</title>
        <authorList>
            <person name="Okuse K."/>
            <person name="Malik-Hall M."/>
            <person name="Baker M.D."/>
            <person name="Poon W.-Y.L."/>
            <person name="Kong H."/>
            <person name="Chao M.V."/>
            <person name="Wood J.N."/>
        </authorList>
    </citation>
    <scope>INTERACTION WITH SCN10A</scope>
</reference>
<name>S10AA_RAT</name>
<protein>
    <recommendedName>
        <fullName>Protein S100-A10</fullName>
    </recommendedName>
    <alternativeName>
        <fullName>Calpactin I light chain</fullName>
    </alternativeName>
    <alternativeName>
        <fullName>Calpactin-1 light chain</fullName>
    </alternativeName>
    <alternativeName>
        <fullName>Cellular ligand of annexin II</fullName>
    </alternativeName>
    <alternativeName>
        <fullName>Nerve growth factor-induced protein 42C</fullName>
    </alternativeName>
    <alternativeName>
        <fullName>S100 calcium-binding protein A10</fullName>
    </alternativeName>
    <alternativeName>
        <fullName>p10 protein</fullName>
    </alternativeName>
    <alternativeName>
        <fullName>p11</fullName>
    </alternativeName>
</protein>
<keyword id="KW-0007">Acetylation</keyword>
<keyword id="KW-0903">Direct protein sequencing</keyword>
<keyword id="KW-1185">Reference proteome</keyword>
<proteinExistence type="evidence at protein level"/>
<feature type="chain" id="PRO_0000144006" description="Protein S100-A10">
    <location>
        <begin position="1"/>
        <end position="95"/>
    </location>
</feature>
<feature type="domain" description="EF-hand" evidence="4">
    <location>
        <begin position="47"/>
        <end position="82"/>
    </location>
</feature>
<feature type="region of interest" description="Ancestral calcium site">
    <location>
        <begin position="60"/>
        <end position="71"/>
    </location>
</feature>
<feature type="modified residue" description="N6-acetyllysine" evidence="3">
    <location>
        <position position="23"/>
    </location>
</feature>
<feature type="modified residue" description="N6-acetyllysine" evidence="3">
    <location>
        <position position="28"/>
    </location>
</feature>
<feature type="modified residue" description="N6-acetyllysine" evidence="3">
    <location>
        <position position="54"/>
    </location>
</feature>
<feature type="modified residue" description="N6-acetyllysine" evidence="3">
    <location>
        <position position="57"/>
    </location>
</feature>
<organism>
    <name type="scientific">Rattus norvegicus</name>
    <name type="common">Rat</name>
    <dbReference type="NCBI Taxonomy" id="10116"/>
    <lineage>
        <taxon>Eukaryota</taxon>
        <taxon>Metazoa</taxon>
        <taxon>Chordata</taxon>
        <taxon>Craniata</taxon>
        <taxon>Vertebrata</taxon>
        <taxon>Euteleostomi</taxon>
        <taxon>Mammalia</taxon>
        <taxon>Eutheria</taxon>
        <taxon>Euarchontoglires</taxon>
        <taxon>Glires</taxon>
        <taxon>Rodentia</taxon>
        <taxon>Myomorpha</taxon>
        <taxon>Muroidea</taxon>
        <taxon>Muridae</taxon>
        <taxon>Murinae</taxon>
        <taxon>Rattus</taxon>
    </lineage>
</organism>
<evidence type="ECO:0000250" key="1"/>
<evidence type="ECO:0000250" key="2">
    <source>
        <dbReference type="UniProtKB" id="P08207"/>
    </source>
</evidence>
<evidence type="ECO:0000250" key="3">
    <source>
        <dbReference type="UniProtKB" id="P60903"/>
    </source>
</evidence>
<evidence type="ECO:0000255" key="4">
    <source>
        <dbReference type="PROSITE-ProRule" id="PRU00448"/>
    </source>
</evidence>
<evidence type="ECO:0000269" key="5">
    <source>
    </source>
</evidence>
<evidence type="ECO:0000305" key="6"/>
<comment type="function">
    <text evidence="1">Because S100A10 induces the dimerization of ANXA2/p36, it may function as a regulator of protein phosphorylation in that the ANXA2 monomer is the preferred target (in vitro) of tyrosine-specific kinase.</text>
</comment>
<comment type="subunit">
    <text evidence="2 3 5">Heterotetramer containing 2 light chains of S100A10/p11 and 2 heavy chains of ANXA2/p36 (By similarity). Interacts with SCN10A (PubMed:12050667). Interacts with TASOR (By similarity).</text>
</comment>
<comment type="interaction">
    <interactant intactId="EBI-1800351">
        <id>P05943</id>
    </interactant>
    <interactant intactId="EBI-1800320">
        <id>Q62968</id>
        <label>Scn10a</label>
    </interactant>
    <organismsDiffer>false</organismsDiffer>
    <experiments>4</experiments>
</comment>
<comment type="induction">
    <text>By nerve growth factor.</text>
</comment>
<comment type="miscellaneous">
    <text>Does not appear to bind calcium. Contains 2 ancestral calcium site related to EF-hand domains that have lost their ability to bind calcium.</text>
</comment>
<comment type="similarity">
    <text evidence="6">Belongs to the S-100 family.</text>
</comment>
<sequence>MPSQMEHAMETMMLTFHRFAGEKNYLTKEDLRVLMEREFPGFLENQKDPLAVDKIMKDLDQCRDGKVGFQSFLSLVAGLIIACNDYFVVHMKQKK</sequence>
<dbReference type="EMBL" id="J03627">
    <property type="protein sequence ID" value="AAA42097.1"/>
    <property type="molecule type" value="mRNA"/>
</dbReference>
<dbReference type="EMBL" id="AF465254">
    <property type="protein sequence ID" value="AAO33353.1"/>
    <property type="molecule type" value="Genomic_DNA"/>
</dbReference>
<dbReference type="EMBL" id="BC091565">
    <property type="protein sequence ID" value="AAH91565.1"/>
    <property type="molecule type" value="mRNA"/>
</dbReference>
<dbReference type="PIR" id="A31373">
    <property type="entry name" value="A31373"/>
</dbReference>
<dbReference type="RefSeq" id="NP_112376.1">
    <property type="nucleotide sequence ID" value="NM_031114.1"/>
</dbReference>
<dbReference type="SMR" id="P05943"/>
<dbReference type="FunCoup" id="P05943">
    <property type="interactions" value="476"/>
</dbReference>
<dbReference type="IntAct" id="P05943">
    <property type="interactions" value="6"/>
</dbReference>
<dbReference type="STRING" id="10116.ENSRNOP00000037097"/>
<dbReference type="iPTMnet" id="P05943"/>
<dbReference type="PhosphoSitePlus" id="P05943"/>
<dbReference type="jPOST" id="P05943"/>
<dbReference type="PaxDb" id="10116-ENSRNOP00000037097"/>
<dbReference type="Ensembl" id="ENSRNOT00000120014.1">
    <property type="protein sequence ID" value="ENSRNOP00000096575.1"/>
    <property type="gene ID" value="ENSRNOG00000023226.5"/>
</dbReference>
<dbReference type="GeneID" id="81778"/>
<dbReference type="KEGG" id="rno:81778"/>
<dbReference type="UCSC" id="RGD:628655">
    <property type="organism name" value="rat"/>
</dbReference>
<dbReference type="AGR" id="RGD:628655"/>
<dbReference type="CTD" id="6281"/>
<dbReference type="RGD" id="628655">
    <property type="gene designation" value="S100a10"/>
</dbReference>
<dbReference type="eggNOG" id="ENOG502S6TB">
    <property type="taxonomic scope" value="Eukaryota"/>
</dbReference>
<dbReference type="GeneTree" id="ENSGT00940000154197"/>
<dbReference type="HOGENOM" id="CLU_138624_2_1_1"/>
<dbReference type="InParanoid" id="P05943"/>
<dbReference type="OrthoDB" id="3489at9989"/>
<dbReference type="PhylomeDB" id="P05943"/>
<dbReference type="TreeFam" id="TF332727"/>
<dbReference type="Reactome" id="R-RNO-75205">
    <property type="pathway name" value="Dissolution of Fibrin Clot"/>
</dbReference>
<dbReference type="PRO" id="PR:P05943"/>
<dbReference type="Proteomes" id="UP000002494">
    <property type="component" value="Chromosome 2"/>
</dbReference>
<dbReference type="Bgee" id="ENSRNOG00000023226">
    <property type="expression patterns" value="Expressed in duodenum and 20 other cell types or tissues"/>
</dbReference>
<dbReference type="ExpressionAtlas" id="P05943">
    <property type="expression patterns" value="baseline and differential"/>
</dbReference>
<dbReference type="GO" id="GO:1990665">
    <property type="term" value="C:AnxA2-p11 complex"/>
    <property type="evidence" value="ECO:0000266"/>
    <property type="project" value="RGD"/>
</dbReference>
<dbReference type="GO" id="GO:0009986">
    <property type="term" value="C:cell surface"/>
    <property type="evidence" value="ECO:0000266"/>
    <property type="project" value="RGD"/>
</dbReference>
<dbReference type="GO" id="GO:0005737">
    <property type="term" value="C:cytoplasm"/>
    <property type="evidence" value="ECO:0000318"/>
    <property type="project" value="GO_Central"/>
</dbReference>
<dbReference type="GO" id="GO:0045121">
    <property type="term" value="C:membrane raft"/>
    <property type="evidence" value="ECO:0000266"/>
    <property type="project" value="RGD"/>
</dbReference>
<dbReference type="GO" id="GO:0005886">
    <property type="term" value="C:plasma membrane"/>
    <property type="evidence" value="ECO:0000266"/>
    <property type="project" value="RGD"/>
</dbReference>
<dbReference type="GO" id="GO:0098797">
    <property type="term" value="C:plasma membrane protein complex"/>
    <property type="evidence" value="ECO:0000266"/>
    <property type="project" value="RGD"/>
</dbReference>
<dbReference type="GO" id="GO:0090575">
    <property type="term" value="C:RNA polymerase II transcription regulator complex"/>
    <property type="evidence" value="ECO:0000266"/>
    <property type="project" value="RGD"/>
</dbReference>
<dbReference type="GO" id="GO:0005509">
    <property type="term" value="F:calcium ion binding"/>
    <property type="evidence" value="ECO:0000318"/>
    <property type="project" value="GO_Central"/>
</dbReference>
<dbReference type="GO" id="GO:0048306">
    <property type="term" value="F:calcium-dependent protein binding"/>
    <property type="evidence" value="ECO:0000318"/>
    <property type="project" value="GO_Central"/>
</dbReference>
<dbReference type="GO" id="GO:0042803">
    <property type="term" value="F:protein homodimerization activity"/>
    <property type="evidence" value="ECO:0000266"/>
    <property type="project" value="RGD"/>
</dbReference>
<dbReference type="GO" id="GO:0044325">
    <property type="term" value="F:transmembrane transporter binding"/>
    <property type="evidence" value="ECO:0000266"/>
    <property type="project" value="RGD"/>
</dbReference>
<dbReference type="GO" id="GO:0001765">
    <property type="term" value="P:membrane raft assembly"/>
    <property type="evidence" value="ECO:0000266"/>
    <property type="project" value="RGD"/>
</dbReference>
<dbReference type="GO" id="GO:0042789">
    <property type="term" value="P:mRNA transcription by RNA polymerase II"/>
    <property type="evidence" value="ECO:0000266"/>
    <property type="project" value="RGD"/>
</dbReference>
<dbReference type="GO" id="GO:0051894">
    <property type="term" value="P:positive regulation of focal adhesion assembly"/>
    <property type="evidence" value="ECO:0000266"/>
    <property type="project" value="RGD"/>
</dbReference>
<dbReference type="GO" id="GO:0010756">
    <property type="term" value="P:positive regulation of plasminogen activation"/>
    <property type="evidence" value="ECO:0000266"/>
    <property type="project" value="RGD"/>
</dbReference>
<dbReference type="GO" id="GO:0051496">
    <property type="term" value="P:positive regulation of stress fiber assembly"/>
    <property type="evidence" value="ECO:0000266"/>
    <property type="project" value="RGD"/>
</dbReference>
<dbReference type="GO" id="GO:1900026">
    <property type="term" value="P:positive regulation of substrate adhesion-dependent cell spreading"/>
    <property type="evidence" value="ECO:0000266"/>
    <property type="project" value="RGD"/>
</dbReference>
<dbReference type="GO" id="GO:0045944">
    <property type="term" value="P:positive regulation of transcription by RNA polymerase II"/>
    <property type="evidence" value="ECO:0000266"/>
    <property type="project" value="RGD"/>
</dbReference>
<dbReference type="GO" id="GO:0072659">
    <property type="term" value="P:protein localization to plasma membrane"/>
    <property type="evidence" value="ECO:0000266"/>
    <property type="project" value="RGD"/>
</dbReference>
<dbReference type="GO" id="GO:0045595">
    <property type="term" value="P:regulation of cell differentiation"/>
    <property type="evidence" value="ECO:0000303"/>
    <property type="project" value="RGD"/>
</dbReference>
<dbReference type="GO" id="GO:0001558">
    <property type="term" value="P:regulation of cell growth"/>
    <property type="evidence" value="ECO:0000303"/>
    <property type="project" value="RGD"/>
</dbReference>
<dbReference type="GO" id="GO:0050767">
    <property type="term" value="P:regulation of neurogenesis"/>
    <property type="evidence" value="ECO:0000266"/>
    <property type="project" value="RGD"/>
</dbReference>
<dbReference type="GO" id="GO:0009410">
    <property type="term" value="P:response to xenobiotic stimulus"/>
    <property type="evidence" value="ECO:0000270"/>
    <property type="project" value="RGD"/>
</dbReference>
<dbReference type="GO" id="GO:0006900">
    <property type="term" value="P:vesicle budding from membrane"/>
    <property type="evidence" value="ECO:0000266"/>
    <property type="project" value="RGD"/>
</dbReference>
<dbReference type="FunFam" id="1.10.238.10:FF:000167">
    <property type="entry name" value="Protein S100-A10"/>
    <property type="match status" value="1"/>
</dbReference>
<dbReference type="Gene3D" id="1.10.238.10">
    <property type="entry name" value="EF-hand"/>
    <property type="match status" value="1"/>
</dbReference>
<dbReference type="InterPro" id="IPR011992">
    <property type="entry name" value="EF-hand-dom_pair"/>
</dbReference>
<dbReference type="InterPro" id="IPR002048">
    <property type="entry name" value="EF_hand_dom"/>
</dbReference>
<dbReference type="InterPro" id="IPR001751">
    <property type="entry name" value="S100/CaBP7/8-like_CS"/>
</dbReference>
<dbReference type="InterPro" id="IPR013787">
    <property type="entry name" value="S100_Ca-bd_sub"/>
</dbReference>
<dbReference type="PANTHER" id="PTHR11639:SF74">
    <property type="entry name" value="PROTEIN S100-A10"/>
    <property type="match status" value="1"/>
</dbReference>
<dbReference type="PANTHER" id="PTHR11639">
    <property type="entry name" value="S100 CALCIUM-BINDING PROTEIN"/>
    <property type="match status" value="1"/>
</dbReference>
<dbReference type="Pfam" id="PF01023">
    <property type="entry name" value="S_100"/>
    <property type="match status" value="1"/>
</dbReference>
<dbReference type="SMART" id="SM01394">
    <property type="entry name" value="S_100"/>
    <property type="match status" value="1"/>
</dbReference>
<dbReference type="SUPFAM" id="SSF47473">
    <property type="entry name" value="EF-hand"/>
    <property type="match status" value="1"/>
</dbReference>
<dbReference type="PROSITE" id="PS50222">
    <property type="entry name" value="EF_HAND_2"/>
    <property type="match status" value="1"/>
</dbReference>
<dbReference type="PROSITE" id="PS00303">
    <property type="entry name" value="S100_CABP"/>
    <property type="match status" value="1"/>
</dbReference>
<gene>
    <name type="primary">S100a10</name>
</gene>